<name>RPOB_MYCMS</name>
<gene>
    <name evidence="1" type="primary">rpoB</name>
    <name type="ordered locus">MSC_1008</name>
</gene>
<reference key="1">
    <citation type="journal article" date="2004" name="Genome Res.">
        <title>The genome sequence of Mycoplasma mycoides subsp. mycoides SC type strain PG1T, the causative agent of contagious bovine pleuropneumonia (CBPP).</title>
        <authorList>
            <person name="Westberg J."/>
            <person name="Persson A."/>
            <person name="Holmberg A."/>
            <person name="Goesmann A."/>
            <person name="Lundeberg J."/>
            <person name="Johansson K.-E."/>
            <person name="Pettersson B."/>
            <person name="Uhlen M."/>
        </authorList>
    </citation>
    <scope>NUCLEOTIDE SEQUENCE [LARGE SCALE GENOMIC DNA]</scope>
    <source>
        <strain>CCUG 32753 / NCTC 10114 / PG1</strain>
    </source>
</reference>
<sequence length="1291" mass="144828">MAYKIRKINRNVERRDYTKVSMNLSLPNLIGIQTETFEWFKTKGIQEVLDEFFPILSFDGSSVLTLENWGFKEPRLSVRQAKEESKIYDAPIYANLKLSVNKTEEIQKEFDGVVLDDALQILSKWLEEKTVSKNITFKQQSQNSYFFELTIKKSEKPDLIQIDIIEDKKTSLICNVSIYKSGEVFLGDFPLMTEAGTFIINGSQKVIVSQLVRSPGAYFNKELNRKTGEMIYFADIIPSRGTWLEYETDSKKIGNDAINPLYVKIDKSRKTTATSLLLAFGISKDDILNIFDNDEVLVETLQQDSIIGDFKIDWSNQVQEIYKKITQGETATSEGASKFINSILFDKRKYDLTKAGRFKLKQKLSIKNRILNRVIAEDIVDANNNVLIAKDTEVNKHNIKQISEILDQDVMSIDLNYLSDIPGTRKVQKIKVYKDSELKTDTTCLIGLTSSSNEEFITVADILSTVSYLLNLKYNIGEIDDIDNLGNRRVRTVGELLQNQFRMGLNRIDKNVKEKLATSDLYKVKTSTIINAKPLTAIIGEFFNLSQLSQFMDQINPLSELTNKRRLTALGSGGLSRDRAGLEVRDVHPSHYGRICPIETPEGPNIGLINNLSTYARVNEYGFITTPYRKVINGIIQNDQVEYLTADQEKNFIIAQSNVNQDENGKILDEIIVSRFNGDDYMAKVEEIDYIDVSPKQIVSVATSGIPFLENDDANRALMGANMQRQAVPLIKPESPIVATGIEFEAARDSGEAIVAKEDAIVKYVDSKTIITDGESGIRTYILSDYERSNNGTSLTQSPIVKVGDVVKKGEIIADGPSMDQGELAIGQNVVVAFSTYNGYNFEDAIVMSERIVIDDRFTSTHIDEYTLEVRNTKQGQEEVIREIPNMSEQAKRHLDAEGIVAIGTEVKVGDVLVGKVTPKGQVQLSPEDKLLHAIFGEKSRNVKDNSLRVPNGGEGIVQSIKRFKAKSALNPDGIELPADIIEVIKVYVVQKRKIQEGDKMSGRHGNKGIISRILPVEDMPHLEDGTPVDIILNPQGVPSRMNIGQILEIHLGMAAKKLNQKVITPAFEGLNEKELEEIMAEAGMTNYGKVTLIDGQTGEPFDKPIAVGVMYMLKLSHMVDDKIHARNVGPYSLITQQPLGGKAQNGGQRFGEMEVWALEAYGAAHTLREILTIKSDDIKGRSKTYEAIVRSKKIPEPGIPESFNVLSKEIMGLGFNMYMIDETGEKSVINAYDKKNFDADNYEDDEILVKTDTLYIDDEDVDAEFEDLTYVDENDILRSFESENDIDEEE</sequence>
<comment type="function">
    <text evidence="1">DNA-dependent RNA polymerase catalyzes the transcription of DNA into RNA using the four ribonucleoside triphosphates as substrates.</text>
</comment>
<comment type="catalytic activity">
    <reaction evidence="1">
        <text>RNA(n) + a ribonucleoside 5'-triphosphate = RNA(n+1) + diphosphate</text>
        <dbReference type="Rhea" id="RHEA:21248"/>
        <dbReference type="Rhea" id="RHEA-COMP:14527"/>
        <dbReference type="Rhea" id="RHEA-COMP:17342"/>
        <dbReference type="ChEBI" id="CHEBI:33019"/>
        <dbReference type="ChEBI" id="CHEBI:61557"/>
        <dbReference type="ChEBI" id="CHEBI:140395"/>
        <dbReference type="EC" id="2.7.7.6"/>
    </reaction>
</comment>
<comment type="subunit">
    <text evidence="1">The RNAP catalytic core consists of 2 alpha, 1 beta, 1 beta' and 1 omega subunit. When a sigma factor is associated with the core the holoenzyme is formed, which can initiate transcription.</text>
</comment>
<comment type="similarity">
    <text evidence="1">Belongs to the RNA polymerase beta chain family.</text>
</comment>
<proteinExistence type="inferred from homology"/>
<accession>Q6MRX6</accession>
<organism>
    <name type="scientific">Mycoplasma mycoides subsp. mycoides SC (strain CCUG 32753 / NCTC 10114 / PG1)</name>
    <dbReference type="NCBI Taxonomy" id="272632"/>
    <lineage>
        <taxon>Bacteria</taxon>
        <taxon>Bacillati</taxon>
        <taxon>Mycoplasmatota</taxon>
        <taxon>Mollicutes</taxon>
        <taxon>Mycoplasmataceae</taxon>
        <taxon>Mycoplasma</taxon>
    </lineage>
</organism>
<evidence type="ECO:0000255" key="1">
    <source>
        <dbReference type="HAMAP-Rule" id="MF_01321"/>
    </source>
</evidence>
<dbReference type="EC" id="2.7.7.6" evidence="1"/>
<dbReference type="EMBL" id="BX293980">
    <property type="protein sequence ID" value="CAE77615.1"/>
    <property type="molecule type" value="Genomic_DNA"/>
</dbReference>
<dbReference type="RefSeq" id="NP_975973.1">
    <property type="nucleotide sequence ID" value="NC_005364.2"/>
</dbReference>
<dbReference type="RefSeq" id="WP_011167152.1">
    <property type="nucleotide sequence ID" value="NC_005364.2"/>
</dbReference>
<dbReference type="SMR" id="Q6MRX6"/>
<dbReference type="STRING" id="272632.MSC_1008"/>
<dbReference type="KEGG" id="mmy:MSC_1008"/>
<dbReference type="PATRIC" id="fig|272632.4.peg.1095"/>
<dbReference type="eggNOG" id="COG0085">
    <property type="taxonomic scope" value="Bacteria"/>
</dbReference>
<dbReference type="HOGENOM" id="CLU_000524_4_1_14"/>
<dbReference type="Proteomes" id="UP000001016">
    <property type="component" value="Chromosome"/>
</dbReference>
<dbReference type="GO" id="GO:0000428">
    <property type="term" value="C:DNA-directed RNA polymerase complex"/>
    <property type="evidence" value="ECO:0007669"/>
    <property type="project" value="UniProtKB-KW"/>
</dbReference>
<dbReference type="GO" id="GO:0003677">
    <property type="term" value="F:DNA binding"/>
    <property type="evidence" value="ECO:0007669"/>
    <property type="project" value="UniProtKB-UniRule"/>
</dbReference>
<dbReference type="GO" id="GO:0003899">
    <property type="term" value="F:DNA-directed RNA polymerase activity"/>
    <property type="evidence" value="ECO:0007669"/>
    <property type="project" value="UniProtKB-UniRule"/>
</dbReference>
<dbReference type="GO" id="GO:0032549">
    <property type="term" value="F:ribonucleoside binding"/>
    <property type="evidence" value="ECO:0007669"/>
    <property type="project" value="InterPro"/>
</dbReference>
<dbReference type="GO" id="GO:0006351">
    <property type="term" value="P:DNA-templated transcription"/>
    <property type="evidence" value="ECO:0007669"/>
    <property type="project" value="UniProtKB-UniRule"/>
</dbReference>
<dbReference type="CDD" id="cd00653">
    <property type="entry name" value="RNA_pol_B_RPB2"/>
    <property type="match status" value="1"/>
</dbReference>
<dbReference type="Gene3D" id="2.40.50.100">
    <property type="match status" value="1"/>
</dbReference>
<dbReference type="Gene3D" id="2.40.50.150">
    <property type="match status" value="1"/>
</dbReference>
<dbReference type="Gene3D" id="3.90.1100.10">
    <property type="match status" value="1"/>
</dbReference>
<dbReference type="Gene3D" id="2.30.150.10">
    <property type="entry name" value="DNA-directed RNA polymerase, beta subunit, external 1 domain"/>
    <property type="match status" value="1"/>
</dbReference>
<dbReference type="Gene3D" id="2.40.270.10">
    <property type="entry name" value="DNA-directed RNA polymerase, subunit 2, domain 6"/>
    <property type="match status" value="1"/>
</dbReference>
<dbReference type="Gene3D" id="3.90.1800.10">
    <property type="entry name" value="RNA polymerase alpha subunit dimerisation domain"/>
    <property type="match status" value="1"/>
</dbReference>
<dbReference type="Gene3D" id="3.90.1110.10">
    <property type="entry name" value="RNA polymerase Rpb2, domain 2"/>
    <property type="match status" value="1"/>
</dbReference>
<dbReference type="HAMAP" id="MF_01321">
    <property type="entry name" value="RNApol_bact_RpoB"/>
    <property type="match status" value="1"/>
</dbReference>
<dbReference type="InterPro" id="IPR042107">
    <property type="entry name" value="DNA-dir_RNA_pol_bsu_ext_1_sf"/>
</dbReference>
<dbReference type="InterPro" id="IPR019462">
    <property type="entry name" value="DNA-dir_RNA_pol_bsu_external_1"/>
</dbReference>
<dbReference type="InterPro" id="IPR015712">
    <property type="entry name" value="DNA-dir_RNA_pol_su2"/>
</dbReference>
<dbReference type="InterPro" id="IPR007120">
    <property type="entry name" value="DNA-dir_RNAP_su2_dom"/>
</dbReference>
<dbReference type="InterPro" id="IPR037033">
    <property type="entry name" value="DNA-dir_RNAP_su2_hyb_sf"/>
</dbReference>
<dbReference type="InterPro" id="IPR010243">
    <property type="entry name" value="RNA_pol_bsu_bac"/>
</dbReference>
<dbReference type="InterPro" id="IPR007121">
    <property type="entry name" value="RNA_pol_bsu_CS"/>
</dbReference>
<dbReference type="InterPro" id="IPR007644">
    <property type="entry name" value="RNA_pol_bsu_protrusion"/>
</dbReference>
<dbReference type="InterPro" id="IPR007642">
    <property type="entry name" value="RNA_pol_Rpb2_2"/>
</dbReference>
<dbReference type="InterPro" id="IPR037034">
    <property type="entry name" value="RNA_pol_Rpb2_2_sf"/>
</dbReference>
<dbReference type="InterPro" id="IPR007645">
    <property type="entry name" value="RNA_pol_Rpb2_3"/>
</dbReference>
<dbReference type="InterPro" id="IPR007641">
    <property type="entry name" value="RNA_pol_Rpb2_7"/>
</dbReference>
<dbReference type="InterPro" id="IPR014724">
    <property type="entry name" value="RNA_pol_RPB2_OB-fold"/>
</dbReference>
<dbReference type="NCBIfam" id="NF001616">
    <property type="entry name" value="PRK00405.1"/>
    <property type="match status" value="1"/>
</dbReference>
<dbReference type="NCBIfam" id="TIGR02013">
    <property type="entry name" value="rpoB"/>
    <property type="match status" value="1"/>
</dbReference>
<dbReference type="PANTHER" id="PTHR20856">
    <property type="entry name" value="DNA-DIRECTED RNA POLYMERASE I SUBUNIT 2"/>
    <property type="match status" value="1"/>
</dbReference>
<dbReference type="Pfam" id="PF04563">
    <property type="entry name" value="RNA_pol_Rpb2_1"/>
    <property type="match status" value="1"/>
</dbReference>
<dbReference type="Pfam" id="PF04561">
    <property type="entry name" value="RNA_pol_Rpb2_2"/>
    <property type="match status" value="2"/>
</dbReference>
<dbReference type="Pfam" id="PF04565">
    <property type="entry name" value="RNA_pol_Rpb2_3"/>
    <property type="match status" value="1"/>
</dbReference>
<dbReference type="Pfam" id="PF10385">
    <property type="entry name" value="RNA_pol_Rpb2_45"/>
    <property type="match status" value="1"/>
</dbReference>
<dbReference type="Pfam" id="PF00562">
    <property type="entry name" value="RNA_pol_Rpb2_6"/>
    <property type="match status" value="1"/>
</dbReference>
<dbReference type="Pfam" id="PF04560">
    <property type="entry name" value="RNA_pol_Rpb2_7"/>
    <property type="match status" value="1"/>
</dbReference>
<dbReference type="SUPFAM" id="SSF64484">
    <property type="entry name" value="beta and beta-prime subunits of DNA dependent RNA-polymerase"/>
    <property type="match status" value="1"/>
</dbReference>
<dbReference type="PROSITE" id="PS01166">
    <property type="entry name" value="RNA_POL_BETA"/>
    <property type="match status" value="1"/>
</dbReference>
<feature type="chain" id="PRO_0000224079" description="DNA-directed RNA polymerase subunit beta">
    <location>
        <begin position="1"/>
        <end position="1291"/>
    </location>
</feature>
<protein>
    <recommendedName>
        <fullName evidence="1">DNA-directed RNA polymerase subunit beta</fullName>
        <shortName evidence="1">RNAP subunit beta</shortName>
        <ecNumber evidence="1">2.7.7.6</ecNumber>
    </recommendedName>
    <alternativeName>
        <fullName evidence="1">RNA polymerase subunit beta</fullName>
    </alternativeName>
    <alternativeName>
        <fullName evidence="1">Transcriptase subunit beta</fullName>
    </alternativeName>
</protein>
<keyword id="KW-0240">DNA-directed RNA polymerase</keyword>
<keyword id="KW-0548">Nucleotidyltransferase</keyword>
<keyword id="KW-1185">Reference proteome</keyword>
<keyword id="KW-0804">Transcription</keyword>
<keyword id="KW-0808">Transferase</keyword>